<accession>A6X0C8</accession>
<comment type="function">
    <text evidence="1">Binds to 23S rRNA. Forms part of two intersubunit bridges in the 70S ribosome.</text>
</comment>
<comment type="subunit">
    <text evidence="1">Part of the 50S ribosomal subunit. Forms a cluster with proteins L3 and L19. In the 70S ribosome, L14 and L19 interact and together make contacts with the 16S rRNA in bridges B5 and B8.</text>
</comment>
<comment type="similarity">
    <text evidence="1">Belongs to the universal ribosomal protein uL14 family.</text>
</comment>
<gene>
    <name evidence="1" type="primary">rplN</name>
    <name type="ordered locus">Oant_1966</name>
</gene>
<protein>
    <recommendedName>
        <fullName evidence="1">Large ribosomal subunit protein uL14</fullName>
    </recommendedName>
    <alternativeName>
        <fullName evidence="2">50S ribosomal protein L14</fullName>
    </alternativeName>
</protein>
<evidence type="ECO:0000255" key="1">
    <source>
        <dbReference type="HAMAP-Rule" id="MF_01367"/>
    </source>
</evidence>
<evidence type="ECO:0000305" key="2"/>
<sequence length="122" mass="13460">MIQMQTNLDVADNSGARRVMCIKVLGGSKRRYASVGDIIVVSIKEAIPRGRVKKGDVMKAVVVRTAKDIRRPDGSVIRFDNNAAVLIDNKKEPIGTRIFGPVPRELRAKNHMKIISLAPEVL</sequence>
<keyword id="KW-1185">Reference proteome</keyword>
<keyword id="KW-0687">Ribonucleoprotein</keyword>
<keyword id="KW-0689">Ribosomal protein</keyword>
<keyword id="KW-0694">RNA-binding</keyword>
<keyword id="KW-0699">rRNA-binding</keyword>
<feature type="chain" id="PRO_1000055656" description="Large ribosomal subunit protein uL14">
    <location>
        <begin position="1"/>
        <end position="122"/>
    </location>
</feature>
<organism>
    <name type="scientific">Brucella anthropi (strain ATCC 49188 / DSM 6882 / CCUG 24695 / JCM 21032 / LMG 3331 / NBRC 15819 / NCTC 12168 / Alc 37)</name>
    <name type="common">Ochrobactrum anthropi</name>
    <dbReference type="NCBI Taxonomy" id="439375"/>
    <lineage>
        <taxon>Bacteria</taxon>
        <taxon>Pseudomonadati</taxon>
        <taxon>Pseudomonadota</taxon>
        <taxon>Alphaproteobacteria</taxon>
        <taxon>Hyphomicrobiales</taxon>
        <taxon>Brucellaceae</taxon>
        <taxon>Brucella/Ochrobactrum group</taxon>
        <taxon>Brucella</taxon>
    </lineage>
</organism>
<name>RL14_BRUA4</name>
<proteinExistence type="inferred from homology"/>
<dbReference type="EMBL" id="CP000758">
    <property type="protein sequence ID" value="ABS14682.1"/>
    <property type="molecule type" value="Genomic_DNA"/>
</dbReference>
<dbReference type="RefSeq" id="WP_004683923.1">
    <property type="nucleotide sequence ID" value="NC_009667.1"/>
</dbReference>
<dbReference type="SMR" id="A6X0C8"/>
<dbReference type="STRING" id="439375.Oant_1966"/>
<dbReference type="GeneID" id="97533534"/>
<dbReference type="KEGG" id="oan:Oant_1966"/>
<dbReference type="eggNOG" id="COG0093">
    <property type="taxonomic scope" value="Bacteria"/>
</dbReference>
<dbReference type="HOGENOM" id="CLU_095071_2_1_5"/>
<dbReference type="PhylomeDB" id="A6X0C8"/>
<dbReference type="Proteomes" id="UP000002301">
    <property type="component" value="Chromosome 1"/>
</dbReference>
<dbReference type="GO" id="GO:0022625">
    <property type="term" value="C:cytosolic large ribosomal subunit"/>
    <property type="evidence" value="ECO:0007669"/>
    <property type="project" value="TreeGrafter"/>
</dbReference>
<dbReference type="GO" id="GO:0070180">
    <property type="term" value="F:large ribosomal subunit rRNA binding"/>
    <property type="evidence" value="ECO:0007669"/>
    <property type="project" value="TreeGrafter"/>
</dbReference>
<dbReference type="GO" id="GO:0003735">
    <property type="term" value="F:structural constituent of ribosome"/>
    <property type="evidence" value="ECO:0007669"/>
    <property type="project" value="InterPro"/>
</dbReference>
<dbReference type="GO" id="GO:0006412">
    <property type="term" value="P:translation"/>
    <property type="evidence" value="ECO:0007669"/>
    <property type="project" value="UniProtKB-UniRule"/>
</dbReference>
<dbReference type="CDD" id="cd00337">
    <property type="entry name" value="Ribosomal_uL14"/>
    <property type="match status" value="1"/>
</dbReference>
<dbReference type="FunFam" id="2.40.150.20:FF:000001">
    <property type="entry name" value="50S ribosomal protein L14"/>
    <property type="match status" value="1"/>
</dbReference>
<dbReference type="Gene3D" id="2.40.150.20">
    <property type="entry name" value="Ribosomal protein L14"/>
    <property type="match status" value="1"/>
</dbReference>
<dbReference type="HAMAP" id="MF_01367">
    <property type="entry name" value="Ribosomal_uL14"/>
    <property type="match status" value="1"/>
</dbReference>
<dbReference type="InterPro" id="IPR000218">
    <property type="entry name" value="Ribosomal_uL14"/>
</dbReference>
<dbReference type="InterPro" id="IPR005745">
    <property type="entry name" value="Ribosomal_uL14_bac-type"/>
</dbReference>
<dbReference type="InterPro" id="IPR019972">
    <property type="entry name" value="Ribosomal_uL14_CS"/>
</dbReference>
<dbReference type="InterPro" id="IPR036853">
    <property type="entry name" value="Ribosomal_uL14_sf"/>
</dbReference>
<dbReference type="NCBIfam" id="TIGR01067">
    <property type="entry name" value="rplN_bact"/>
    <property type="match status" value="1"/>
</dbReference>
<dbReference type="PANTHER" id="PTHR11761">
    <property type="entry name" value="50S/60S RIBOSOMAL PROTEIN L14/L23"/>
    <property type="match status" value="1"/>
</dbReference>
<dbReference type="PANTHER" id="PTHR11761:SF3">
    <property type="entry name" value="LARGE RIBOSOMAL SUBUNIT PROTEIN UL14M"/>
    <property type="match status" value="1"/>
</dbReference>
<dbReference type="Pfam" id="PF00238">
    <property type="entry name" value="Ribosomal_L14"/>
    <property type="match status" value="1"/>
</dbReference>
<dbReference type="SMART" id="SM01374">
    <property type="entry name" value="Ribosomal_L14"/>
    <property type="match status" value="1"/>
</dbReference>
<dbReference type="SUPFAM" id="SSF50193">
    <property type="entry name" value="Ribosomal protein L14"/>
    <property type="match status" value="1"/>
</dbReference>
<dbReference type="PROSITE" id="PS00049">
    <property type="entry name" value="RIBOSOMAL_L14"/>
    <property type="match status" value="1"/>
</dbReference>
<reference key="1">
    <citation type="journal article" date="2011" name="J. Bacteriol.">
        <title>Genome of Ochrobactrum anthropi ATCC 49188 T, a versatile opportunistic pathogen and symbiont of several eukaryotic hosts.</title>
        <authorList>
            <person name="Chain P.S."/>
            <person name="Lang D.M."/>
            <person name="Comerci D.J."/>
            <person name="Malfatti S.A."/>
            <person name="Vergez L.M."/>
            <person name="Shin M."/>
            <person name="Ugalde R.A."/>
            <person name="Garcia E."/>
            <person name="Tolmasky M.E."/>
        </authorList>
    </citation>
    <scope>NUCLEOTIDE SEQUENCE [LARGE SCALE GENOMIC DNA]</scope>
    <source>
        <strain>ATCC 49188 / DSM 6882 / CCUG 24695 / JCM 21032 / LMG 3331 / NBRC 15819 / NCTC 12168 / Alc 37</strain>
    </source>
</reference>